<dbReference type="EC" id="2.8.1.7" evidence="1"/>
<dbReference type="EC" id="4.4.1.16" evidence="1"/>
<dbReference type="EMBL" id="CP000468">
    <property type="protein sequence ID" value="ABJ01058.1"/>
    <property type="molecule type" value="Genomic_DNA"/>
</dbReference>
<dbReference type="RefSeq" id="WP_000144575.1">
    <property type="nucleotide sequence ID" value="NZ_CADILS010000002.1"/>
</dbReference>
<dbReference type="SMR" id="A1ABL8"/>
<dbReference type="GeneID" id="75204526"/>
<dbReference type="KEGG" id="ecv:APECO1_757"/>
<dbReference type="HOGENOM" id="CLU_003433_2_5_6"/>
<dbReference type="UniPathway" id="UPA00266"/>
<dbReference type="Proteomes" id="UP000008216">
    <property type="component" value="Chromosome"/>
</dbReference>
<dbReference type="GO" id="GO:0005737">
    <property type="term" value="C:cytoplasm"/>
    <property type="evidence" value="ECO:0007669"/>
    <property type="project" value="UniProtKB-SubCell"/>
</dbReference>
<dbReference type="GO" id="GO:0031071">
    <property type="term" value="F:cysteine desulfurase activity"/>
    <property type="evidence" value="ECO:0007669"/>
    <property type="project" value="UniProtKB-UniRule"/>
</dbReference>
<dbReference type="GO" id="GO:0030170">
    <property type="term" value="F:pyridoxal phosphate binding"/>
    <property type="evidence" value="ECO:0007669"/>
    <property type="project" value="InterPro"/>
</dbReference>
<dbReference type="GO" id="GO:0009000">
    <property type="term" value="F:selenocysteine lyase activity"/>
    <property type="evidence" value="ECO:0007669"/>
    <property type="project" value="UniProtKB-UniRule"/>
</dbReference>
<dbReference type="GO" id="GO:0006534">
    <property type="term" value="P:cysteine metabolic process"/>
    <property type="evidence" value="ECO:0007669"/>
    <property type="project" value="InterPro"/>
</dbReference>
<dbReference type="CDD" id="cd06453">
    <property type="entry name" value="SufS_like"/>
    <property type="match status" value="1"/>
</dbReference>
<dbReference type="FunFam" id="3.40.640.10:FF:000042">
    <property type="entry name" value="Cysteine desulfurase"/>
    <property type="match status" value="1"/>
</dbReference>
<dbReference type="Gene3D" id="3.90.1150.10">
    <property type="entry name" value="Aspartate Aminotransferase, domain 1"/>
    <property type="match status" value="1"/>
</dbReference>
<dbReference type="Gene3D" id="3.40.640.10">
    <property type="entry name" value="Type I PLP-dependent aspartate aminotransferase-like (Major domain)"/>
    <property type="match status" value="1"/>
</dbReference>
<dbReference type="HAMAP" id="MF_01831">
    <property type="entry name" value="SufS_aminotrans_5"/>
    <property type="match status" value="1"/>
</dbReference>
<dbReference type="InterPro" id="IPR000192">
    <property type="entry name" value="Aminotrans_V_dom"/>
</dbReference>
<dbReference type="InterPro" id="IPR020578">
    <property type="entry name" value="Aminotrans_V_PyrdxlP_BS"/>
</dbReference>
<dbReference type="InterPro" id="IPR010970">
    <property type="entry name" value="Cys_dSase_SufS"/>
</dbReference>
<dbReference type="InterPro" id="IPR015424">
    <property type="entry name" value="PyrdxlP-dep_Trfase"/>
</dbReference>
<dbReference type="InterPro" id="IPR015421">
    <property type="entry name" value="PyrdxlP-dep_Trfase_major"/>
</dbReference>
<dbReference type="InterPro" id="IPR015422">
    <property type="entry name" value="PyrdxlP-dep_Trfase_small"/>
</dbReference>
<dbReference type="NCBIfam" id="NF006791">
    <property type="entry name" value="PRK09295.1"/>
    <property type="match status" value="1"/>
</dbReference>
<dbReference type="NCBIfam" id="TIGR01979">
    <property type="entry name" value="sufS"/>
    <property type="match status" value="1"/>
</dbReference>
<dbReference type="PANTHER" id="PTHR43586">
    <property type="entry name" value="CYSTEINE DESULFURASE"/>
    <property type="match status" value="1"/>
</dbReference>
<dbReference type="PANTHER" id="PTHR43586:SF25">
    <property type="entry name" value="CYSTEINE DESULFURASE"/>
    <property type="match status" value="1"/>
</dbReference>
<dbReference type="Pfam" id="PF00266">
    <property type="entry name" value="Aminotran_5"/>
    <property type="match status" value="1"/>
</dbReference>
<dbReference type="SUPFAM" id="SSF53383">
    <property type="entry name" value="PLP-dependent transferases"/>
    <property type="match status" value="1"/>
</dbReference>
<dbReference type="PROSITE" id="PS00595">
    <property type="entry name" value="AA_TRANSFER_CLASS_5"/>
    <property type="match status" value="1"/>
</dbReference>
<keyword id="KW-0963">Cytoplasm</keyword>
<keyword id="KW-0456">Lyase</keyword>
<keyword id="KW-0663">Pyridoxal phosphate</keyword>
<keyword id="KW-1185">Reference proteome</keyword>
<keyword id="KW-0808">Transferase</keyword>
<proteinExistence type="inferred from homology"/>
<sequence>MTFSVDKVRADFPVLSREVNGLPLAYLDSAASAQKPSQVIDAEAEFYRHGYAAVHRGIHTLSAQATEKMENVRKRASLFINARSAEELVFVRGTTEGINLVANSWGNSNVRAGDNIIISQMEHHANIVPWQMLCARVGAELRVIPLNPDGTLQLETLPTLFDEKTRLLAITHVSNVLGTENPLAEMITLAHQHGAKVLVDGAQAVMHHPVDVQALDCDFYVFSGHKLYGPTGIGILYVKEALLQEMPPWEGGGSMIATVSLSEGTTWTKAPWRFEAGTPNTGGIIGLGAALEYVSALGLNNIAEYEQNLMHYALSQLESVPDLTLYGPQNRLGVIAFNLGKHHAYDVGSFLDNYGIAVRTGHHCAMPLMAYYNVPAMCRASLAMYNTHEEVDRLVTGLQRIHRLLG</sequence>
<reference key="1">
    <citation type="journal article" date="2007" name="J. Bacteriol.">
        <title>The genome sequence of avian pathogenic Escherichia coli strain O1:K1:H7 shares strong similarities with human extraintestinal pathogenic E. coli genomes.</title>
        <authorList>
            <person name="Johnson T.J."/>
            <person name="Kariyawasam S."/>
            <person name="Wannemuehler Y."/>
            <person name="Mangiamele P."/>
            <person name="Johnson S.J."/>
            <person name="Doetkott C."/>
            <person name="Skyberg J.A."/>
            <person name="Lynne A.M."/>
            <person name="Johnson J.R."/>
            <person name="Nolan L.K."/>
        </authorList>
    </citation>
    <scope>NUCLEOTIDE SEQUENCE [LARGE SCALE GENOMIC DNA]</scope>
</reference>
<accession>A1ABL8</accession>
<protein>
    <recommendedName>
        <fullName evidence="1">Cysteine desulfurase</fullName>
        <ecNumber evidence="1">2.8.1.7</ecNumber>
    </recommendedName>
    <alternativeName>
        <fullName evidence="1">Selenocysteine beta-lyase</fullName>
        <shortName evidence="1">SCL</shortName>
    </alternativeName>
    <alternativeName>
        <fullName evidence="1">Selenocysteine lyase</fullName>
        <ecNumber evidence="1">4.4.1.16</ecNumber>
    </alternativeName>
    <alternativeName>
        <fullName evidence="1">Selenocysteine reductase</fullName>
    </alternativeName>
</protein>
<evidence type="ECO:0000255" key="1">
    <source>
        <dbReference type="HAMAP-Rule" id="MF_01831"/>
    </source>
</evidence>
<organism>
    <name type="scientific">Escherichia coli O1:K1 / APEC</name>
    <dbReference type="NCBI Taxonomy" id="405955"/>
    <lineage>
        <taxon>Bacteria</taxon>
        <taxon>Pseudomonadati</taxon>
        <taxon>Pseudomonadota</taxon>
        <taxon>Gammaproteobacteria</taxon>
        <taxon>Enterobacterales</taxon>
        <taxon>Enterobacteriaceae</taxon>
        <taxon>Escherichia</taxon>
    </lineage>
</organism>
<comment type="function">
    <text evidence="1">Cysteine desulfurases mobilize the sulfur from L-cysteine to yield L-alanine, an essential step in sulfur metabolism for biosynthesis of a variety of sulfur-containing biomolecules. Component of the suf operon, which is activated and required under specific conditions such as oxidative stress and iron limitation. Acts as a potent selenocysteine lyase in vitro, that mobilizes selenium from L-selenocysteine. Selenocysteine lyase activity is however unsure in vivo.</text>
</comment>
<comment type="catalytic activity">
    <reaction evidence="1">
        <text>(sulfur carrier)-H + L-cysteine = (sulfur carrier)-SH + L-alanine</text>
        <dbReference type="Rhea" id="RHEA:43892"/>
        <dbReference type="Rhea" id="RHEA-COMP:14737"/>
        <dbReference type="Rhea" id="RHEA-COMP:14739"/>
        <dbReference type="ChEBI" id="CHEBI:29917"/>
        <dbReference type="ChEBI" id="CHEBI:35235"/>
        <dbReference type="ChEBI" id="CHEBI:57972"/>
        <dbReference type="ChEBI" id="CHEBI:64428"/>
        <dbReference type="EC" id="2.8.1.7"/>
    </reaction>
</comment>
<comment type="catalytic activity">
    <reaction evidence="1">
        <text>L-selenocysteine + AH2 = hydrogenselenide + L-alanine + A + H(+)</text>
        <dbReference type="Rhea" id="RHEA:11632"/>
        <dbReference type="ChEBI" id="CHEBI:13193"/>
        <dbReference type="ChEBI" id="CHEBI:15378"/>
        <dbReference type="ChEBI" id="CHEBI:17499"/>
        <dbReference type="ChEBI" id="CHEBI:29317"/>
        <dbReference type="ChEBI" id="CHEBI:57843"/>
        <dbReference type="ChEBI" id="CHEBI:57972"/>
        <dbReference type="EC" id="4.4.1.16"/>
    </reaction>
</comment>
<comment type="cofactor">
    <cofactor evidence="1">
        <name>pyridoxal 5'-phosphate</name>
        <dbReference type="ChEBI" id="CHEBI:597326"/>
    </cofactor>
</comment>
<comment type="pathway">
    <text evidence="1">Cofactor biosynthesis; iron-sulfur cluster biosynthesis.</text>
</comment>
<comment type="subunit">
    <text evidence="1">Homodimer. Interacts with SufE and the SufBCD complex composed of SufB, SufC and SufD. The interaction with SufE is required to mediate the direct transfer of the sulfur atom from the S-sulfanylcysteine.</text>
</comment>
<comment type="subcellular location">
    <subcellularLocation>
        <location evidence="1">Cytoplasm</location>
    </subcellularLocation>
</comment>
<comment type="similarity">
    <text evidence="1">Belongs to the class-V pyridoxal-phosphate-dependent aminotransferase family. Csd subfamily.</text>
</comment>
<name>SUFS_ECOK1</name>
<gene>
    <name evidence="1" type="primary">sufS</name>
    <name type="ordered locus">Ecok1_15640</name>
    <name type="ORF">APECO1_757</name>
</gene>
<feature type="chain" id="PRO_1000070422" description="Cysteine desulfurase">
    <location>
        <begin position="1"/>
        <end position="406"/>
    </location>
</feature>
<feature type="active site" description="Cysteine persulfide intermediate" evidence="1">
    <location>
        <position position="364"/>
    </location>
</feature>
<feature type="modified residue" description="N6-(pyridoxal phosphate)lysine" evidence="1">
    <location>
        <position position="226"/>
    </location>
</feature>